<gene>
    <name type="ordered locus">VV1_3121</name>
</gene>
<reference key="1">
    <citation type="submission" date="2002-12" db="EMBL/GenBank/DDBJ databases">
        <title>Complete genome sequence of Vibrio vulnificus CMCP6.</title>
        <authorList>
            <person name="Rhee J.H."/>
            <person name="Kim S.Y."/>
            <person name="Chung S.S."/>
            <person name="Kim J.J."/>
            <person name="Moon Y.H."/>
            <person name="Jeong H."/>
            <person name="Choy H.E."/>
        </authorList>
    </citation>
    <scope>NUCLEOTIDE SEQUENCE [LARGE SCALE GENOMIC DNA]</scope>
    <source>
        <strain>CMCP6</strain>
    </source>
</reference>
<reference key="2">
    <citation type="journal article" date="2011" name="Mol. Syst. Biol.">
        <title>Integrative genome-scale metabolic analysis of Vibrio vulnificus for drug targeting and discovery.</title>
        <authorList>
            <person name="Kim H.U."/>
            <person name="Kim S.Y."/>
            <person name="Jeong H."/>
            <person name="Kim T.Y."/>
            <person name="Kim J.J."/>
            <person name="Choy H.E."/>
            <person name="Yi K.Y."/>
            <person name="Rhee J.H."/>
            <person name="Lee S.Y."/>
        </authorList>
    </citation>
    <scope>SEQUENCE REVISION TO 14; 45 AND 67</scope>
    <source>
        <strain>CMCP6</strain>
    </source>
</reference>
<organism>
    <name type="scientific">Vibrio vulnificus (strain CMCP6)</name>
    <dbReference type="NCBI Taxonomy" id="216895"/>
    <lineage>
        <taxon>Bacteria</taxon>
        <taxon>Pseudomonadati</taxon>
        <taxon>Pseudomonadota</taxon>
        <taxon>Gammaproteobacteria</taxon>
        <taxon>Vibrionales</taxon>
        <taxon>Vibrionaceae</taxon>
        <taxon>Vibrio</taxon>
    </lineage>
</organism>
<comment type="similarity">
    <text evidence="1">Belongs to the UPF0352 family.</text>
</comment>
<proteinExistence type="inferred from homology"/>
<name>Y3121_VIBVU</name>
<sequence>MPITSKYTDEQVETILTEIGAVLDKHGATPELSLMIAGNIATNVLNQQVAASQRKLIAEKFAQALISSLQEPKTH</sequence>
<evidence type="ECO:0000255" key="1">
    <source>
        <dbReference type="HAMAP-Rule" id="MF_00816"/>
    </source>
</evidence>
<protein>
    <recommendedName>
        <fullName evidence="1">UPF0352 protein VV1_3121</fullName>
    </recommendedName>
</protein>
<feature type="chain" id="PRO_0000201804" description="UPF0352 protein VV1_3121">
    <location>
        <begin position="1"/>
        <end position="75"/>
    </location>
</feature>
<accession>Q8D866</accession>
<dbReference type="EMBL" id="AE016795">
    <property type="protein sequence ID" value="AAO11442.2"/>
    <property type="molecule type" value="Genomic_DNA"/>
</dbReference>
<dbReference type="RefSeq" id="WP_011080921.1">
    <property type="nucleotide sequence ID" value="NC_004459.3"/>
</dbReference>
<dbReference type="SMR" id="Q8D866"/>
<dbReference type="KEGG" id="vvu:VV1_3121"/>
<dbReference type="HOGENOM" id="CLU_175457_0_0_6"/>
<dbReference type="Proteomes" id="UP000002275">
    <property type="component" value="Chromosome 1"/>
</dbReference>
<dbReference type="Gene3D" id="1.10.3390.10">
    <property type="entry name" value="YejL-like"/>
    <property type="match status" value="1"/>
</dbReference>
<dbReference type="HAMAP" id="MF_00816">
    <property type="entry name" value="UPF0352"/>
    <property type="match status" value="1"/>
</dbReference>
<dbReference type="InterPro" id="IPR009857">
    <property type="entry name" value="UPF0352"/>
</dbReference>
<dbReference type="InterPro" id="IPR023202">
    <property type="entry name" value="YejL_sf"/>
</dbReference>
<dbReference type="NCBIfam" id="NF010242">
    <property type="entry name" value="PRK13689.1"/>
    <property type="match status" value="1"/>
</dbReference>
<dbReference type="Pfam" id="PF07208">
    <property type="entry name" value="DUF1414"/>
    <property type="match status" value="1"/>
</dbReference>
<dbReference type="PIRSF" id="PIRSF006188">
    <property type="entry name" value="UCP006188"/>
    <property type="match status" value="1"/>
</dbReference>
<dbReference type="SUPFAM" id="SSF158651">
    <property type="entry name" value="YejL-like"/>
    <property type="match status" value="1"/>
</dbReference>